<gene>
    <name evidence="1" type="primary">ureE</name>
    <name type="ordered locus">YPTS_3057</name>
</gene>
<keyword id="KW-0143">Chaperone</keyword>
<keyword id="KW-0963">Cytoplasm</keyword>
<keyword id="KW-0533">Nickel</keyword>
<reference key="1">
    <citation type="submission" date="2008-04" db="EMBL/GenBank/DDBJ databases">
        <title>Complete sequence of Yersinia pseudotuberculosis PB1/+.</title>
        <authorList>
            <person name="Copeland A."/>
            <person name="Lucas S."/>
            <person name="Lapidus A."/>
            <person name="Glavina del Rio T."/>
            <person name="Dalin E."/>
            <person name="Tice H."/>
            <person name="Bruce D."/>
            <person name="Goodwin L."/>
            <person name="Pitluck S."/>
            <person name="Munk A.C."/>
            <person name="Brettin T."/>
            <person name="Detter J.C."/>
            <person name="Han C."/>
            <person name="Tapia R."/>
            <person name="Schmutz J."/>
            <person name="Larimer F."/>
            <person name="Land M."/>
            <person name="Hauser L."/>
            <person name="Challacombe J.F."/>
            <person name="Green L."/>
            <person name="Lindler L.E."/>
            <person name="Nikolich M.P."/>
            <person name="Richardson P."/>
        </authorList>
    </citation>
    <scope>NUCLEOTIDE SEQUENCE [LARGE SCALE GENOMIC DNA]</scope>
    <source>
        <strain>PB1/+</strain>
    </source>
</reference>
<dbReference type="EMBL" id="CP001048">
    <property type="protein sequence ID" value="ACC90014.1"/>
    <property type="molecule type" value="Genomic_DNA"/>
</dbReference>
<dbReference type="RefSeq" id="WP_011192844.1">
    <property type="nucleotide sequence ID" value="NZ_CP009780.1"/>
</dbReference>
<dbReference type="SMR" id="B2KAA3"/>
<dbReference type="GeneID" id="49785047"/>
<dbReference type="KEGG" id="ypb:YPTS_3057"/>
<dbReference type="PATRIC" id="fig|502801.10.peg.2489"/>
<dbReference type="GO" id="GO:0005737">
    <property type="term" value="C:cytoplasm"/>
    <property type="evidence" value="ECO:0007669"/>
    <property type="project" value="UniProtKB-SubCell"/>
</dbReference>
<dbReference type="GO" id="GO:0016151">
    <property type="term" value="F:nickel cation binding"/>
    <property type="evidence" value="ECO:0007669"/>
    <property type="project" value="UniProtKB-UniRule"/>
</dbReference>
<dbReference type="GO" id="GO:0051082">
    <property type="term" value="F:unfolded protein binding"/>
    <property type="evidence" value="ECO:0007669"/>
    <property type="project" value="UniProtKB-UniRule"/>
</dbReference>
<dbReference type="GO" id="GO:0006457">
    <property type="term" value="P:protein folding"/>
    <property type="evidence" value="ECO:0007669"/>
    <property type="project" value="InterPro"/>
</dbReference>
<dbReference type="CDD" id="cd00571">
    <property type="entry name" value="UreE"/>
    <property type="match status" value="1"/>
</dbReference>
<dbReference type="Gene3D" id="2.60.260.20">
    <property type="entry name" value="Urease metallochaperone UreE, N-terminal domain"/>
    <property type="match status" value="1"/>
</dbReference>
<dbReference type="HAMAP" id="MF_00822">
    <property type="entry name" value="UreE"/>
    <property type="match status" value="1"/>
</dbReference>
<dbReference type="InterPro" id="IPR012406">
    <property type="entry name" value="UreE"/>
</dbReference>
<dbReference type="InterPro" id="IPR004029">
    <property type="entry name" value="UreE_N"/>
</dbReference>
<dbReference type="InterPro" id="IPR036118">
    <property type="entry name" value="UreE_N_sf"/>
</dbReference>
<dbReference type="NCBIfam" id="NF009761">
    <property type="entry name" value="PRK13262.1"/>
    <property type="match status" value="1"/>
</dbReference>
<dbReference type="Pfam" id="PF02814">
    <property type="entry name" value="UreE_N"/>
    <property type="match status" value="1"/>
</dbReference>
<dbReference type="SMART" id="SM00988">
    <property type="entry name" value="UreE_N"/>
    <property type="match status" value="1"/>
</dbReference>
<dbReference type="SUPFAM" id="SSF69287">
    <property type="entry name" value="Urease metallochaperone UreE, N-terminal domain"/>
    <property type="match status" value="1"/>
</dbReference>
<sequence>MILIEHILGNVKKDPVWREKLKDATFDLLILDQREAQKSRCRKSSTQGLDLGISLDRNVVLADGDVLAWDEETNVAVVVQINLRDVMVIDLSELKSRSPDELIKTCFELGHALGNQHWKAVTKHNEVYVPLTVATTMMDSVMRTHGFQHLPFRFVKGAEILPLLTNSEARLLFGGAEDTDTHVHVASPLDEPHGSGLHIHGIHSHGEGHSHGDHDHDHSHSHGDHDHDHKH</sequence>
<evidence type="ECO:0000255" key="1">
    <source>
        <dbReference type="HAMAP-Rule" id="MF_00822"/>
    </source>
</evidence>
<evidence type="ECO:0000256" key="2">
    <source>
        <dbReference type="SAM" id="MobiDB-lite"/>
    </source>
</evidence>
<proteinExistence type="inferred from homology"/>
<protein>
    <recommendedName>
        <fullName evidence="1">Urease accessory protein UreE</fullName>
    </recommendedName>
</protein>
<organism>
    <name type="scientific">Yersinia pseudotuberculosis serotype IB (strain PB1/+)</name>
    <dbReference type="NCBI Taxonomy" id="502801"/>
    <lineage>
        <taxon>Bacteria</taxon>
        <taxon>Pseudomonadati</taxon>
        <taxon>Pseudomonadota</taxon>
        <taxon>Gammaproteobacteria</taxon>
        <taxon>Enterobacterales</taxon>
        <taxon>Yersiniaceae</taxon>
        <taxon>Yersinia</taxon>
    </lineage>
</organism>
<feature type="chain" id="PRO_1000197454" description="Urease accessory protein UreE">
    <location>
        <begin position="1"/>
        <end position="231"/>
    </location>
</feature>
<feature type="region of interest" description="Disordered" evidence="2">
    <location>
        <begin position="185"/>
        <end position="231"/>
    </location>
</feature>
<feature type="compositionally biased region" description="Basic and acidic residues" evidence="2">
    <location>
        <begin position="204"/>
        <end position="231"/>
    </location>
</feature>
<name>UREE_YERPB</name>
<accession>B2KAA3</accession>
<comment type="function">
    <text evidence="1">Involved in urease metallocenter assembly. Binds nickel. Probably functions as a nickel donor during metallocenter assembly.</text>
</comment>
<comment type="subcellular location">
    <subcellularLocation>
        <location evidence="1">Cytoplasm</location>
    </subcellularLocation>
</comment>
<comment type="similarity">
    <text evidence="1">Belongs to the UreE family.</text>
</comment>